<sequence>MKKAYYGDFGGQFLPESAMFALNELEGAFLKFSKDKLFKKELNELLKTYVGRPTPLYFARNLSKKYQHEIYLKREDLNHTGAHKINNAIAQALLAKKMGKKKIIAETGAGQHGLATATAAALLGLECEIYMGATDVQRQALNVYKMELLGAKIHAVQSGLKTLKEATTAAIQAWVGDIKNIFYVVGSAVGPYPYPKMVMHFQSIIGKECKMQLQKLNKKVDYIIAAVGGGSNAAGIFYDFIKDENVKLIGIEAGGLGIDTPYHAATLNKGKTGIIHGMKTKVLQDDLGNILPVHSVSAGLDYPGIGPLHAFLFESKRAQYHAISDEECMQALKLLCKEEGIIAAIESSHALAFLEKLCPTLKKKSVIVVNLSGRGDKDMQMIRDYKKGVIYG</sequence>
<accession>A1VY69</accession>
<reference key="1">
    <citation type="submission" date="2006-12" db="EMBL/GenBank/DDBJ databases">
        <authorList>
            <person name="Fouts D.E."/>
            <person name="Nelson K.E."/>
            <person name="Sebastian Y."/>
        </authorList>
    </citation>
    <scope>NUCLEOTIDE SEQUENCE [LARGE SCALE GENOMIC DNA]</scope>
    <source>
        <strain>81-176</strain>
    </source>
</reference>
<keyword id="KW-0028">Amino-acid biosynthesis</keyword>
<keyword id="KW-0057">Aromatic amino acid biosynthesis</keyword>
<keyword id="KW-0456">Lyase</keyword>
<keyword id="KW-0663">Pyridoxal phosphate</keyword>
<keyword id="KW-0822">Tryptophan biosynthesis</keyword>
<name>TRPB_CAMJJ</name>
<feature type="chain" id="PRO_1000018332" description="Tryptophan synthase beta chain">
    <location>
        <begin position="1"/>
        <end position="392"/>
    </location>
</feature>
<feature type="modified residue" description="N6-(pyridoxal phosphate)lysine" evidence="1">
    <location>
        <position position="84"/>
    </location>
</feature>
<proteinExistence type="inferred from homology"/>
<comment type="function">
    <text evidence="1">The beta subunit is responsible for the synthesis of L-tryptophan from indole and L-serine.</text>
</comment>
<comment type="catalytic activity">
    <reaction evidence="1">
        <text>(1S,2R)-1-C-(indol-3-yl)glycerol 3-phosphate + L-serine = D-glyceraldehyde 3-phosphate + L-tryptophan + H2O</text>
        <dbReference type="Rhea" id="RHEA:10532"/>
        <dbReference type="ChEBI" id="CHEBI:15377"/>
        <dbReference type="ChEBI" id="CHEBI:33384"/>
        <dbReference type="ChEBI" id="CHEBI:57912"/>
        <dbReference type="ChEBI" id="CHEBI:58866"/>
        <dbReference type="ChEBI" id="CHEBI:59776"/>
        <dbReference type="EC" id="4.2.1.20"/>
    </reaction>
</comment>
<comment type="cofactor">
    <cofactor evidence="1">
        <name>pyridoxal 5'-phosphate</name>
        <dbReference type="ChEBI" id="CHEBI:597326"/>
    </cofactor>
</comment>
<comment type="pathway">
    <text evidence="1">Amino-acid biosynthesis; L-tryptophan biosynthesis; L-tryptophan from chorismate: step 5/5.</text>
</comment>
<comment type="subunit">
    <text evidence="1">Tetramer of two alpha and two beta chains.</text>
</comment>
<comment type="similarity">
    <text evidence="1">Belongs to the TrpB family.</text>
</comment>
<gene>
    <name evidence="1" type="primary">trpB</name>
    <name type="ordered locus">CJJ81176_0372</name>
</gene>
<protein>
    <recommendedName>
        <fullName evidence="1">Tryptophan synthase beta chain</fullName>
        <ecNumber evidence="1">4.2.1.20</ecNumber>
    </recommendedName>
</protein>
<organism>
    <name type="scientific">Campylobacter jejuni subsp. jejuni serotype O:23/36 (strain 81-176)</name>
    <dbReference type="NCBI Taxonomy" id="354242"/>
    <lineage>
        <taxon>Bacteria</taxon>
        <taxon>Pseudomonadati</taxon>
        <taxon>Campylobacterota</taxon>
        <taxon>Epsilonproteobacteria</taxon>
        <taxon>Campylobacterales</taxon>
        <taxon>Campylobacteraceae</taxon>
        <taxon>Campylobacter</taxon>
    </lineage>
</organism>
<dbReference type="EC" id="4.2.1.20" evidence="1"/>
<dbReference type="EMBL" id="CP000538">
    <property type="protein sequence ID" value="EAQ73016.1"/>
    <property type="molecule type" value="Genomic_DNA"/>
</dbReference>
<dbReference type="RefSeq" id="WP_002854204.1">
    <property type="nucleotide sequence ID" value="NC_008787.1"/>
</dbReference>
<dbReference type="SMR" id="A1VY69"/>
<dbReference type="KEGG" id="cjj:CJJ81176_0372"/>
<dbReference type="eggNOG" id="COG0133">
    <property type="taxonomic scope" value="Bacteria"/>
</dbReference>
<dbReference type="HOGENOM" id="CLU_016734_3_1_7"/>
<dbReference type="UniPathway" id="UPA00035">
    <property type="reaction ID" value="UER00044"/>
</dbReference>
<dbReference type="Proteomes" id="UP000000646">
    <property type="component" value="Chromosome"/>
</dbReference>
<dbReference type="GO" id="GO:0005737">
    <property type="term" value="C:cytoplasm"/>
    <property type="evidence" value="ECO:0007669"/>
    <property type="project" value="TreeGrafter"/>
</dbReference>
<dbReference type="GO" id="GO:0004834">
    <property type="term" value="F:tryptophan synthase activity"/>
    <property type="evidence" value="ECO:0007669"/>
    <property type="project" value="UniProtKB-UniRule"/>
</dbReference>
<dbReference type="CDD" id="cd06446">
    <property type="entry name" value="Trp-synth_B"/>
    <property type="match status" value="1"/>
</dbReference>
<dbReference type="FunFam" id="3.40.50.1100:FF:000004">
    <property type="entry name" value="Tryptophan synthase beta chain"/>
    <property type="match status" value="1"/>
</dbReference>
<dbReference type="Gene3D" id="3.40.50.1100">
    <property type="match status" value="2"/>
</dbReference>
<dbReference type="HAMAP" id="MF_00133">
    <property type="entry name" value="Trp_synth_beta"/>
    <property type="match status" value="1"/>
</dbReference>
<dbReference type="InterPro" id="IPR006653">
    <property type="entry name" value="Trp_synth_b_CS"/>
</dbReference>
<dbReference type="InterPro" id="IPR006654">
    <property type="entry name" value="Trp_synth_beta"/>
</dbReference>
<dbReference type="InterPro" id="IPR023026">
    <property type="entry name" value="Trp_synth_beta/beta-like"/>
</dbReference>
<dbReference type="InterPro" id="IPR001926">
    <property type="entry name" value="TrpB-like_PALP"/>
</dbReference>
<dbReference type="InterPro" id="IPR036052">
    <property type="entry name" value="TrpB-like_PALP_sf"/>
</dbReference>
<dbReference type="NCBIfam" id="TIGR00263">
    <property type="entry name" value="trpB"/>
    <property type="match status" value="1"/>
</dbReference>
<dbReference type="PANTHER" id="PTHR48077:SF3">
    <property type="entry name" value="TRYPTOPHAN SYNTHASE"/>
    <property type="match status" value="1"/>
</dbReference>
<dbReference type="PANTHER" id="PTHR48077">
    <property type="entry name" value="TRYPTOPHAN SYNTHASE-RELATED"/>
    <property type="match status" value="1"/>
</dbReference>
<dbReference type="Pfam" id="PF00291">
    <property type="entry name" value="PALP"/>
    <property type="match status" value="1"/>
</dbReference>
<dbReference type="PIRSF" id="PIRSF001413">
    <property type="entry name" value="Trp_syn_beta"/>
    <property type="match status" value="1"/>
</dbReference>
<dbReference type="SUPFAM" id="SSF53686">
    <property type="entry name" value="Tryptophan synthase beta subunit-like PLP-dependent enzymes"/>
    <property type="match status" value="1"/>
</dbReference>
<dbReference type="PROSITE" id="PS00168">
    <property type="entry name" value="TRP_SYNTHASE_BETA"/>
    <property type="match status" value="1"/>
</dbReference>
<evidence type="ECO:0000255" key="1">
    <source>
        <dbReference type="HAMAP-Rule" id="MF_00133"/>
    </source>
</evidence>